<gene>
    <name evidence="1" type="primary">mnmA</name>
    <name type="ordered locus">PsycPRwf_0961</name>
</gene>
<feature type="chain" id="PRO_0000349763" description="tRNA-specific 2-thiouridylase MnmA">
    <location>
        <begin position="1"/>
        <end position="398"/>
    </location>
</feature>
<feature type="region of interest" description="Interaction with target base in tRNA" evidence="1">
    <location>
        <begin position="119"/>
        <end position="121"/>
    </location>
</feature>
<feature type="region of interest" description="Interaction with tRNA" evidence="1">
    <location>
        <begin position="176"/>
        <end position="178"/>
    </location>
</feature>
<feature type="region of interest" description="Interaction with tRNA" evidence="1">
    <location>
        <begin position="343"/>
        <end position="344"/>
    </location>
</feature>
<feature type="active site" description="Nucleophile" evidence="1">
    <location>
        <position position="124"/>
    </location>
</feature>
<feature type="active site" description="Cysteine persulfide intermediate" evidence="1">
    <location>
        <position position="226"/>
    </location>
</feature>
<feature type="binding site" evidence="1">
    <location>
        <begin position="33"/>
        <end position="40"/>
    </location>
    <ligand>
        <name>ATP</name>
        <dbReference type="ChEBI" id="CHEBI:30616"/>
    </ligand>
</feature>
<feature type="binding site" evidence="1">
    <location>
        <position position="59"/>
    </location>
    <ligand>
        <name>ATP</name>
        <dbReference type="ChEBI" id="CHEBI:30616"/>
    </ligand>
</feature>
<feature type="binding site" evidence="1">
    <location>
        <position position="148"/>
    </location>
    <ligand>
        <name>ATP</name>
        <dbReference type="ChEBI" id="CHEBI:30616"/>
    </ligand>
</feature>
<feature type="site" description="Interaction with tRNA" evidence="1">
    <location>
        <position position="149"/>
    </location>
</feature>
<feature type="site" description="Interaction with tRNA" evidence="1">
    <location>
        <position position="378"/>
    </location>
</feature>
<feature type="disulfide bond" description="Alternate" evidence="1">
    <location>
        <begin position="124"/>
        <end position="226"/>
    </location>
</feature>
<dbReference type="EC" id="2.8.1.13" evidence="1"/>
<dbReference type="EMBL" id="CP000713">
    <property type="protein sequence ID" value="ABQ93911.1"/>
    <property type="molecule type" value="Genomic_DNA"/>
</dbReference>
<dbReference type="SMR" id="A5WE20"/>
<dbReference type="STRING" id="349106.PsycPRwf_0961"/>
<dbReference type="KEGG" id="prw:PsycPRwf_0961"/>
<dbReference type="eggNOG" id="COG0482">
    <property type="taxonomic scope" value="Bacteria"/>
</dbReference>
<dbReference type="HOGENOM" id="CLU_035188_1_0_6"/>
<dbReference type="GO" id="GO:0005737">
    <property type="term" value="C:cytoplasm"/>
    <property type="evidence" value="ECO:0007669"/>
    <property type="project" value="UniProtKB-SubCell"/>
</dbReference>
<dbReference type="GO" id="GO:0005524">
    <property type="term" value="F:ATP binding"/>
    <property type="evidence" value="ECO:0007669"/>
    <property type="project" value="UniProtKB-KW"/>
</dbReference>
<dbReference type="GO" id="GO:0000049">
    <property type="term" value="F:tRNA binding"/>
    <property type="evidence" value="ECO:0007669"/>
    <property type="project" value="UniProtKB-KW"/>
</dbReference>
<dbReference type="GO" id="GO:0103016">
    <property type="term" value="F:tRNA-uridine 2-sulfurtransferase activity"/>
    <property type="evidence" value="ECO:0007669"/>
    <property type="project" value="UniProtKB-EC"/>
</dbReference>
<dbReference type="GO" id="GO:0002143">
    <property type="term" value="P:tRNA wobble position uridine thiolation"/>
    <property type="evidence" value="ECO:0007669"/>
    <property type="project" value="TreeGrafter"/>
</dbReference>
<dbReference type="CDD" id="cd01998">
    <property type="entry name" value="MnmA_TRMU-like"/>
    <property type="match status" value="1"/>
</dbReference>
<dbReference type="FunFam" id="2.30.30.280:FF:000001">
    <property type="entry name" value="tRNA-specific 2-thiouridylase MnmA"/>
    <property type="match status" value="1"/>
</dbReference>
<dbReference type="FunFam" id="2.40.30.10:FF:000023">
    <property type="entry name" value="tRNA-specific 2-thiouridylase MnmA"/>
    <property type="match status" value="1"/>
</dbReference>
<dbReference type="FunFam" id="3.40.50.620:FF:000004">
    <property type="entry name" value="tRNA-specific 2-thiouridylase MnmA"/>
    <property type="match status" value="1"/>
</dbReference>
<dbReference type="Gene3D" id="2.30.30.280">
    <property type="entry name" value="Adenine nucleotide alpha hydrolases-like domains"/>
    <property type="match status" value="1"/>
</dbReference>
<dbReference type="Gene3D" id="3.40.50.620">
    <property type="entry name" value="HUPs"/>
    <property type="match status" value="1"/>
</dbReference>
<dbReference type="Gene3D" id="2.40.30.10">
    <property type="entry name" value="Translation factors"/>
    <property type="match status" value="1"/>
</dbReference>
<dbReference type="HAMAP" id="MF_00144">
    <property type="entry name" value="tRNA_thiouridyl_MnmA"/>
    <property type="match status" value="1"/>
</dbReference>
<dbReference type="InterPro" id="IPR004506">
    <property type="entry name" value="MnmA-like"/>
</dbReference>
<dbReference type="InterPro" id="IPR046885">
    <property type="entry name" value="MnmA-like_C"/>
</dbReference>
<dbReference type="InterPro" id="IPR046884">
    <property type="entry name" value="MnmA-like_central"/>
</dbReference>
<dbReference type="InterPro" id="IPR023382">
    <property type="entry name" value="MnmA-like_central_sf"/>
</dbReference>
<dbReference type="InterPro" id="IPR014729">
    <property type="entry name" value="Rossmann-like_a/b/a_fold"/>
</dbReference>
<dbReference type="NCBIfam" id="NF001138">
    <property type="entry name" value="PRK00143.1"/>
    <property type="match status" value="1"/>
</dbReference>
<dbReference type="NCBIfam" id="TIGR00420">
    <property type="entry name" value="trmU"/>
    <property type="match status" value="1"/>
</dbReference>
<dbReference type="PANTHER" id="PTHR11933:SF5">
    <property type="entry name" value="MITOCHONDRIAL TRNA-SPECIFIC 2-THIOURIDYLASE 1"/>
    <property type="match status" value="1"/>
</dbReference>
<dbReference type="PANTHER" id="PTHR11933">
    <property type="entry name" value="TRNA 5-METHYLAMINOMETHYL-2-THIOURIDYLATE -METHYLTRANSFERASE"/>
    <property type="match status" value="1"/>
</dbReference>
<dbReference type="Pfam" id="PF03054">
    <property type="entry name" value="tRNA_Me_trans"/>
    <property type="match status" value="1"/>
</dbReference>
<dbReference type="Pfam" id="PF20258">
    <property type="entry name" value="tRNA_Me_trans_C"/>
    <property type="match status" value="1"/>
</dbReference>
<dbReference type="Pfam" id="PF20259">
    <property type="entry name" value="tRNA_Me_trans_M"/>
    <property type="match status" value="1"/>
</dbReference>
<dbReference type="SUPFAM" id="SSF52402">
    <property type="entry name" value="Adenine nucleotide alpha hydrolases-like"/>
    <property type="match status" value="1"/>
</dbReference>
<keyword id="KW-0067">ATP-binding</keyword>
<keyword id="KW-0963">Cytoplasm</keyword>
<keyword id="KW-1015">Disulfide bond</keyword>
<keyword id="KW-0547">Nucleotide-binding</keyword>
<keyword id="KW-0694">RNA-binding</keyword>
<keyword id="KW-0808">Transferase</keyword>
<keyword id="KW-0819">tRNA processing</keyword>
<keyword id="KW-0820">tRNA-binding</keyword>
<proteinExistence type="inferred from homology"/>
<reference key="1">
    <citation type="submission" date="2007-05" db="EMBL/GenBank/DDBJ databases">
        <title>Complete sequence of chromosome of Psychrobacter sp. PRwf-1.</title>
        <authorList>
            <consortium name="US DOE Joint Genome Institute"/>
            <person name="Copeland A."/>
            <person name="Lucas S."/>
            <person name="Lapidus A."/>
            <person name="Barry K."/>
            <person name="Detter J.C."/>
            <person name="Glavina del Rio T."/>
            <person name="Hammon N."/>
            <person name="Israni S."/>
            <person name="Dalin E."/>
            <person name="Tice H."/>
            <person name="Pitluck S."/>
            <person name="Chain P."/>
            <person name="Malfatti S."/>
            <person name="Shin M."/>
            <person name="Vergez L."/>
            <person name="Schmutz J."/>
            <person name="Larimer F."/>
            <person name="Land M."/>
            <person name="Hauser L."/>
            <person name="Kyrpides N."/>
            <person name="Kim E."/>
            <person name="Tiedje J."/>
            <person name="Richardson P."/>
        </authorList>
    </citation>
    <scope>NUCLEOTIDE SEQUENCE [LARGE SCALE GENOMIC DNA]</scope>
    <source>
        <strain>PRwf-1</strain>
    </source>
</reference>
<organism>
    <name type="scientific">Psychrobacter sp. (strain PRwf-1)</name>
    <dbReference type="NCBI Taxonomy" id="349106"/>
    <lineage>
        <taxon>Bacteria</taxon>
        <taxon>Pseudomonadati</taxon>
        <taxon>Pseudomonadota</taxon>
        <taxon>Gammaproteobacteria</taxon>
        <taxon>Moraxellales</taxon>
        <taxon>Moraxellaceae</taxon>
        <taxon>Psychrobacter</taxon>
    </lineage>
</organism>
<accession>A5WE20</accession>
<protein>
    <recommendedName>
        <fullName evidence="1">tRNA-specific 2-thiouridylase MnmA</fullName>
        <ecNumber evidence="1">2.8.1.13</ecNumber>
    </recommendedName>
</protein>
<evidence type="ECO:0000255" key="1">
    <source>
        <dbReference type="HAMAP-Rule" id="MF_00144"/>
    </source>
</evidence>
<sequence length="398" mass="44248">MTTSTGFDNNAYNLPALRLSDVPNPAQTRVVVGMSGGVDSSVSAVLLQQAGFQVEGLFMKNWEEDDGTEYCTAMEDLADAQAVCDKIGINLHTANFAMEYWDRVFEHFLAEYQAGRTPNPDILCNKEIKFKAFLDYAVTLGADYIATGHYTRRSVNYTREDGLEVAHLMRGLDNNKDQSYFLHAVGGDKIAKTLFPVGELEKPEVRRIAEEHDLITAKKKDSTGICFIGERRFKDFLQQYLPAKPGNIVTDDGITIGKHDGLMYYTLGQRGGIGIGGVKDRPEEPWFVLQKDLSNNELIVGQGHDHPMLLSQRLTAYKLDWVERIAPAAIFSEQGLKCMAKTRYRQPDQSCTVFADSDDGSRVKVIFDEPQRAVTPGQSAVFYIGEVCLGGGVIESFE</sequence>
<name>MNMA_PSYWF</name>
<comment type="function">
    <text evidence="1">Catalyzes the 2-thiolation of uridine at the wobble position (U34) of tRNA, leading to the formation of s(2)U34.</text>
</comment>
<comment type="catalytic activity">
    <reaction evidence="1">
        <text>S-sulfanyl-L-cysteinyl-[protein] + uridine(34) in tRNA + AH2 + ATP = 2-thiouridine(34) in tRNA + L-cysteinyl-[protein] + A + AMP + diphosphate + H(+)</text>
        <dbReference type="Rhea" id="RHEA:47032"/>
        <dbReference type="Rhea" id="RHEA-COMP:10131"/>
        <dbReference type="Rhea" id="RHEA-COMP:11726"/>
        <dbReference type="Rhea" id="RHEA-COMP:11727"/>
        <dbReference type="Rhea" id="RHEA-COMP:11728"/>
        <dbReference type="ChEBI" id="CHEBI:13193"/>
        <dbReference type="ChEBI" id="CHEBI:15378"/>
        <dbReference type="ChEBI" id="CHEBI:17499"/>
        <dbReference type="ChEBI" id="CHEBI:29950"/>
        <dbReference type="ChEBI" id="CHEBI:30616"/>
        <dbReference type="ChEBI" id="CHEBI:33019"/>
        <dbReference type="ChEBI" id="CHEBI:61963"/>
        <dbReference type="ChEBI" id="CHEBI:65315"/>
        <dbReference type="ChEBI" id="CHEBI:87170"/>
        <dbReference type="ChEBI" id="CHEBI:456215"/>
        <dbReference type="EC" id="2.8.1.13"/>
    </reaction>
</comment>
<comment type="subcellular location">
    <subcellularLocation>
        <location evidence="1">Cytoplasm</location>
    </subcellularLocation>
</comment>
<comment type="similarity">
    <text evidence="1">Belongs to the MnmA/TRMU family.</text>
</comment>